<proteinExistence type="inferred from homology"/>
<dbReference type="EMBL" id="EF614270">
    <property type="protein sequence ID" value="ABQ81444.1"/>
    <property type="molecule type" value="Genomic_DNA"/>
</dbReference>
<dbReference type="RefSeq" id="YP_001542441.1">
    <property type="nucleotide sequence ID" value="NC_009962.1"/>
</dbReference>
<dbReference type="SMR" id="A8SE94"/>
<dbReference type="GeneID" id="5729375"/>
<dbReference type="GO" id="GO:0009535">
    <property type="term" value="C:chloroplast thylakoid membrane"/>
    <property type="evidence" value="ECO:0007669"/>
    <property type="project" value="UniProtKB-SubCell"/>
</dbReference>
<dbReference type="GO" id="GO:0009523">
    <property type="term" value="C:photosystem II"/>
    <property type="evidence" value="ECO:0007669"/>
    <property type="project" value="UniProtKB-KW"/>
</dbReference>
<dbReference type="GO" id="GO:0019684">
    <property type="term" value="P:photosynthesis, light reaction"/>
    <property type="evidence" value="ECO:0007669"/>
    <property type="project" value="InterPro"/>
</dbReference>
<dbReference type="HAMAP" id="MF_00438">
    <property type="entry name" value="PSII_PsbM"/>
    <property type="match status" value="1"/>
</dbReference>
<dbReference type="InterPro" id="IPR007826">
    <property type="entry name" value="PSII_PsbM"/>
</dbReference>
<dbReference type="InterPro" id="IPR037269">
    <property type="entry name" value="PSII_PsbM_sf"/>
</dbReference>
<dbReference type="NCBIfam" id="TIGR03038">
    <property type="entry name" value="PS_II_psbM"/>
    <property type="match status" value="1"/>
</dbReference>
<dbReference type="PANTHER" id="PTHR35774">
    <property type="entry name" value="PHOTOSYSTEM II REACTION CENTER PROTEIN M"/>
    <property type="match status" value="1"/>
</dbReference>
<dbReference type="PANTHER" id="PTHR35774:SF1">
    <property type="entry name" value="PHOTOSYSTEM II REACTION CENTER PROTEIN M"/>
    <property type="match status" value="1"/>
</dbReference>
<dbReference type="Pfam" id="PF05151">
    <property type="entry name" value="PsbM"/>
    <property type="match status" value="1"/>
</dbReference>
<dbReference type="SUPFAM" id="SSF161033">
    <property type="entry name" value="Photosystem II reaction center protein M, PsbM"/>
    <property type="match status" value="1"/>
</dbReference>
<feature type="chain" id="PRO_0000325723" description="Photosystem II reaction center protein M">
    <location>
        <begin position="1"/>
        <end position="34"/>
    </location>
</feature>
<feature type="transmembrane region" description="Helical" evidence="1">
    <location>
        <begin position="5"/>
        <end position="25"/>
    </location>
</feature>
<sequence>MEVNILAFIATALFILVPTAFLLIIYVKTVSKND</sequence>
<organism>
    <name type="scientific">Ceratophyllum demersum</name>
    <name type="common">Rigid hornwort</name>
    <name type="synonym">Coontail</name>
    <dbReference type="NCBI Taxonomy" id="4428"/>
    <lineage>
        <taxon>Eukaryota</taxon>
        <taxon>Viridiplantae</taxon>
        <taxon>Streptophyta</taxon>
        <taxon>Embryophyta</taxon>
        <taxon>Tracheophyta</taxon>
        <taxon>Spermatophyta</taxon>
        <taxon>Magnoliopsida</taxon>
        <taxon>Ceratophyllales</taxon>
        <taxon>Ceratophyllaceae</taxon>
        <taxon>Ceratophyllum</taxon>
    </lineage>
</organism>
<accession>A8SE94</accession>
<evidence type="ECO:0000255" key="1">
    <source>
        <dbReference type="HAMAP-Rule" id="MF_00438"/>
    </source>
</evidence>
<gene>
    <name evidence="1" type="primary">psbM</name>
</gene>
<reference key="1">
    <citation type="journal article" date="2007" name="Proc. Natl. Acad. Sci. U.S.A.">
        <title>Using plastid genome-scale data to resolve enigmatic relationships among basal angiosperms.</title>
        <authorList>
            <person name="Moore M.J."/>
            <person name="Bell C.D."/>
            <person name="Soltis P.S."/>
            <person name="Soltis D.E."/>
        </authorList>
    </citation>
    <scope>NUCLEOTIDE SEQUENCE [LARGE SCALE GENOMIC DNA]</scope>
</reference>
<protein>
    <recommendedName>
        <fullName evidence="1">Photosystem II reaction center protein M</fullName>
        <shortName evidence="1">PSII-M</shortName>
    </recommendedName>
</protein>
<name>PSBM_CERDE</name>
<comment type="function">
    <text evidence="1">One of the components of the core complex of photosystem II (PSII). PSII is a light-driven water:plastoquinone oxidoreductase that uses light energy to abstract electrons from H(2)O, generating O(2) and a proton gradient subsequently used for ATP formation. It consists of a core antenna complex that captures photons, and an electron transfer chain that converts photonic excitation into a charge separation. This subunit is found at the monomer-monomer interface.</text>
</comment>
<comment type="subunit">
    <text evidence="1">PSII is composed of 1 copy each of membrane proteins PsbA, PsbB, PsbC, PsbD, PsbE, PsbF, PsbH, PsbI, PsbJ, PsbK, PsbL, PsbM, PsbT, PsbX, PsbY, PsbZ, Psb30/Ycf12, at least 3 peripheral proteins of the oxygen-evolving complex and a large number of cofactors. It forms dimeric complexes.</text>
</comment>
<comment type="subcellular location">
    <subcellularLocation>
        <location evidence="1">Plastid</location>
        <location evidence="1">Chloroplast thylakoid membrane</location>
        <topology evidence="1">Single-pass membrane protein</topology>
    </subcellularLocation>
</comment>
<comment type="similarity">
    <text evidence="1">Belongs to the PsbM family.</text>
</comment>
<keyword id="KW-0150">Chloroplast</keyword>
<keyword id="KW-0472">Membrane</keyword>
<keyword id="KW-0602">Photosynthesis</keyword>
<keyword id="KW-0604">Photosystem II</keyword>
<keyword id="KW-0934">Plastid</keyword>
<keyword id="KW-0674">Reaction center</keyword>
<keyword id="KW-0793">Thylakoid</keyword>
<keyword id="KW-0812">Transmembrane</keyword>
<keyword id="KW-1133">Transmembrane helix</keyword>
<geneLocation type="chloroplast"/>